<keyword id="KW-0002">3D-structure</keyword>
<keyword id="KW-1003">Cell membrane</keyword>
<keyword id="KW-0145">Chemotaxis</keyword>
<keyword id="KW-0283">Flagellar rotation</keyword>
<keyword id="KW-0375">Hydrogen ion transport</keyword>
<keyword id="KW-0406">Ion transport</keyword>
<keyword id="KW-0472">Membrane</keyword>
<keyword id="KW-1185">Reference proteome</keyword>
<keyword id="KW-0812">Transmembrane</keyword>
<keyword id="KW-1133">Transmembrane helix</keyword>
<keyword id="KW-0813">Transport</keyword>
<evidence type="ECO:0000250" key="1"/>
<evidence type="ECO:0000255" key="2"/>
<evidence type="ECO:0000305" key="3"/>
<evidence type="ECO:0007829" key="4">
    <source>
        <dbReference type="PDB" id="6YSL"/>
    </source>
</evidence>
<organism>
    <name type="scientific">Bacillus subtilis (strain 168)</name>
    <dbReference type="NCBI Taxonomy" id="224308"/>
    <lineage>
        <taxon>Bacteria</taxon>
        <taxon>Bacillati</taxon>
        <taxon>Bacillota</taxon>
        <taxon>Bacilli</taxon>
        <taxon>Bacillales</taxon>
        <taxon>Bacillaceae</taxon>
        <taxon>Bacillus</taxon>
    </lineage>
</organism>
<sequence>MDKTSLIGIILAFVALSVGMVLKGVSFSALANPAAILIIIAGTISAVVIAFPTKEIKKVPTLFRVLFKENKQLTIEELIPMFSEWAQLARREGLLALEASIEDVDDAFLKNGLSMAVDGQSAEFIRDIMTEEVEAMEDRHQAGAAIFTQAGTYAPTLGVLGAVIGLIAALSHMDNTDELGHAISAAFVATLLGIFTGYVLWHPFANKLKRKSKQEVKLREVMIEGVLSVLEGQAPKVIEQKLLMYLPAKDRLKFAEQGEAQNGEKKEEEA</sequence>
<dbReference type="EMBL" id="M77238">
    <property type="protein sequence ID" value="AAA22602.1"/>
    <property type="molecule type" value="Genomic_DNA"/>
</dbReference>
<dbReference type="EMBL" id="AL009126">
    <property type="protein sequence ID" value="CAB13242.1"/>
    <property type="molecule type" value="Genomic_DNA"/>
</dbReference>
<dbReference type="PIR" id="A42882">
    <property type="entry name" value="A42882"/>
</dbReference>
<dbReference type="RefSeq" id="NP_389252.1">
    <property type="nucleotide sequence ID" value="NC_000964.3"/>
</dbReference>
<dbReference type="RefSeq" id="WP_003244739.1">
    <property type="nucleotide sequence ID" value="NZ_OZ025638.1"/>
</dbReference>
<dbReference type="PDB" id="6YSL">
    <property type="method" value="EM"/>
    <property type="resolution" value="3.50 A"/>
    <property type="chains" value="C/D/E/F/G=1-270"/>
</dbReference>
<dbReference type="PDBsum" id="6YSL"/>
<dbReference type="EMDB" id="EMD-10899"/>
<dbReference type="SMR" id="P28611"/>
<dbReference type="FunCoup" id="P28611">
    <property type="interactions" value="222"/>
</dbReference>
<dbReference type="IntAct" id="P28611">
    <property type="interactions" value="1"/>
</dbReference>
<dbReference type="STRING" id="224308.BSU13690"/>
<dbReference type="TCDB" id="1.A.30.1.3">
    <property type="family name" value="the h(+)- or na(+)-translocating bacterial flagellar motor/exbbd outer membrane transport energizer (mot/exb) superfamily"/>
</dbReference>
<dbReference type="jPOST" id="P28611"/>
<dbReference type="PaxDb" id="224308-BSU13690"/>
<dbReference type="EnsemblBacteria" id="CAB13242">
    <property type="protein sequence ID" value="CAB13242"/>
    <property type="gene ID" value="BSU_13690"/>
</dbReference>
<dbReference type="GeneID" id="939302"/>
<dbReference type="KEGG" id="bsu:BSU13690"/>
<dbReference type="PATRIC" id="fig|224308.179.peg.1486"/>
<dbReference type="eggNOG" id="COG1291">
    <property type="taxonomic scope" value="Bacteria"/>
</dbReference>
<dbReference type="InParanoid" id="P28611"/>
<dbReference type="OrthoDB" id="9806929at2"/>
<dbReference type="PhylomeDB" id="P28611"/>
<dbReference type="BioCyc" id="BSUB:BSU13690-MONOMER"/>
<dbReference type="Proteomes" id="UP000001570">
    <property type="component" value="Chromosome"/>
</dbReference>
<dbReference type="GO" id="GO:0005886">
    <property type="term" value="C:plasma membrane"/>
    <property type="evidence" value="ECO:0000318"/>
    <property type="project" value="GO_Central"/>
</dbReference>
<dbReference type="GO" id="GO:0071978">
    <property type="term" value="P:bacterial-type flagellum-dependent swarming motility"/>
    <property type="evidence" value="ECO:0000318"/>
    <property type="project" value="GO_Central"/>
</dbReference>
<dbReference type="GO" id="GO:0006935">
    <property type="term" value="P:chemotaxis"/>
    <property type="evidence" value="ECO:0007669"/>
    <property type="project" value="UniProtKB-KW"/>
</dbReference>
<dbReference type="GO" id="GO:1902600">
    <property type="term" value="P:proton transmembrane transport"/>
    <property type="evidence" value="ECO:0007669"/>
    <property type="project" value="UniProtKB-KW"/>
</dbReference>
<dbReference type="InterPro" id="IPR000540">
    <property type="entry name" value="Flag_MotA_CS"/>
</dbReference>
<dbReference type="InterPro" id="IPR047055">
    <property type="entry name" value="MotA-like"/>
</dbReference>
<dbReference type="InterPro" id="IPR002898">
    <property type="entry name" value="MotA_ExbB_proton_chnl"/>
</dbReference>
<dbReference type="InterPro" id="IPR046786">
    <property type="entry name" value="MotA_N"/>
</dbReference>
<dbReference type="NCBIfam" id="NF005997">
    <property type="entry name" value="PRK08124.1"/>
    <property type="match status" value="1"/>
</dbReference>
<dbReference type="PANTHER" id="PTHR30433">
    <property type="entry name" value="CHEMOTAXIS PROTEIN MOTA"/>
    <property type="match status" value="1"/>
</dbReference>
<dbReference type="PANTHER" id="PTHR30433:SF3">
    <property type="entry name" value="MOTILITY PROTEIN A"/>
    <property type="match status" value="1"/>
</dbReference>
<dbReference type="Pfam" id="PF01618">
    <property type="entry name" value="MotA_ExbB"/>
    <property type="match status" value="1"/>
</dbReference>
<dbReference type="Pfam" id="PF20560">
    <property type="entry name" value="MotA_N"/>
    <property type="match status" value="1"/>
</dbReference>
<dbReference type="PROSITE" id="PS01307">
    <property type="entry name" value="MOTA"/>
    <property type="match status" value="1"/>
</dbReference>
<reference key="1">
    <citation type="journal article" date="1992" name="J. Bacteriol.">
        <title>An operon of Bacillus subtilis motility genes transcribed by the sigma D form of RNA polymerase.</title>
        <authorList>
            <person name="Mirel D.B."/>
            <person name="Lustre V.M."/>
            <person name="Chamberlin M.J."/>
        </authorList>
    </citation>
    <scope>NUCLEOTIDE SEQUENCE [GENOMIC DNA]</scope>
</reference>
<reference key="2">
    <citation type="journal article" date="1997" name="Nature">
        <title>The complete genome sequence of the Gram-positive bacterium Bacillus subtilis.</title>
        <authorList>
            <person name="Kunst F."/>
            <person name="Ogasawara N."/>
            <person name="Moszer I."/>
            <person name="Albertini A.M."/>
            <person name="Alloni G."/>
            <person name="Azevedo V."/>
            <person name="Bertero M.G."/>
            <person name="Bessieres P."/>
            <person name="Bolotin A."/>
            <person name="Borchert S."/>
            <person name="Borriss R."/>
            <person name="Boursier L."/>
            <person name="Brans A."/>
            <person name="Braun M."/>
            <person name="Brignell S.C."/>
            <person name="Bron S."/>
            <person name="Brouillet S."/>
            <person name="Bruschi C.V."/>
            <person name="Caldwell B."/>
            <person name="Capuano V."/>
            <person name="Carter N.M."/>
            <person name="Choi S.-K."/>
            <person name="Codani J.-J."/>
            <person name="Connerton I.F."/>
            <person name="Cummings N.J."/>
            <person name="Daniel R.A."/>
            <person name="Denizot F."/>
            <person name="Devine K.M."/>
            <person name="Duesterhoeft A."/>
            <person name="Ehrlich S.D."/>
            <person name="Emmerson P.T."/>
            <person name="Entian K.-D."/>
            <person name="Errington J."/>
            <person name="Fabret C."/>
            <person name="Ferrari E."/>
            <person name="Foulger D."/>
            <person name="Fritz C."/>
            <person name="Fujita M."/>
            <person name="Fujita Y."/>
            <person name="Fuma S."/>
            <person name="Galizzi A."/>
            <person name="Galleron N."/>
            <person name="Ghim S.-Y."/>
            <person name="Glaser P."/>
            <person name="Goffeau A."/>
            <person name="Golightly E.J."/>
            <person name="Grandi G."/>
            <person name="Guiseppi G."/>
            <person name="Guy B.J."/>
            <person name="Haga K."/>
            <person name="Haiech J."/>
            <person name="Harwood C.R."/>
            <person name="Henaut A."/>
            <person name="Hilbert H."/>
            <person name="Holsappel S."/>
            <person name="Hosono S."/>
            <person name="Hullo M.-F."/>
            <person name="Itaya M."/>
            <person name="Jones L.-M."/>
            <person name="Joris B."/>
            <person name="Karamata D."/>
            <person name="Kasahara Y."/>
            <person name="Klaerr-Blanchard M."/>
            <person name="Klein C."/>
            <person name="Kobayashi Y."/>
            <person name="Koetter P."/>
            <person name="Koningstein G."/>
            <person name="Krogh S."/>
            <person name="Kumano M."/>
            <person name="Kurita K."/>
            <person name="Lapidus A."/>
            <person name="Lardinois S."/>
            <person name="Lauber J."/>
            <person name="Lazarevic V."/>
            <person name="Lee S.-M."/>
            <person name="Levine A."/>
            <person name="Liu H."/>
            <person name="Masuda S."/>
            <person name="Mauel C."/>
            <person name="Medigue C."/>
            <person name="Medina N."/>
            <person name="Mellado R.P."/>
            <person name="Mizuno M."/>
            <person name="Moestl D."/>
            <person name="Nakai S."/>
            <person name="Noback M."/>
            <person name="Noone D."/>
            <person name="O'Reilly M."/>
            <person name="Ogawa K."/>
            <person name="Ogiwara A."/>
            <person name="Oudega B."/>
            <person name="Park S.-H."/>
            <person name="Parro V."/>
            <person name="Pohl T.M."/>
            <person name="Portetelle D."/>
            <person name="Porwollik S."/>
            <person name="Prescott A.M."/>
            <person name="Presecan E."/>
            <person name="Pujic P."/>
            <person name="Purnelle B."/>
            <person name="Rapoport G."/>
            <person name="Rey M."/>
            <person name="Reynolds S."/>
            <person name="Rieger M."/>
            <person name="Rivolta C."/>
            <person name="Rocha E."/>
            <person name="Roche B."/>
            <person name="Rose M."/>
            <person name="Sadaie Y."/>
            <person name="Sato T."/>
            <person name="Scanlan E."/>
            <person name="Schleich S."/>
            <person name="Schroeter R."/>
            <person name="Scoffone F."/>
            <person name="Sekiguchi J."/>
            <person name="Sekowska A."/>
            <person name="Seror S.J."/>
            <person name="Serror P."/>
            <person name="Shin B.-S."/>
            <person name="Soldo B."/>
            <person name="Sorokin A."/>
            <person name="Tacconi E."/>
            <person name="Takagi T."/>
            <person name="Takahashi H."/>
            <person name="Takemaru K."/>
            <person name="Takeuchi M."/>
            <person name="Tamakoshi A."/>
            <person name="Tanaka T."/>
            <person name="Terpstra P."/>
            <person name="Tognoni A."/>
            <person name="Tosato V."/>
            <person name="Uchiyama S."/>
            <person name="Vandenbol M."/>
            <person name="Vannier F."/>
            <person name="Vassarotti A."/>
            <person name="Viari A."/>
            <person name="Wambutt R."/>
            <person name="Wedler E."/>
            <person name="Wedler H."/>
            <person name="Weitzenegger T."/>
            <person name="Winters P."/>
            <person name="Wipat A."/>
            <person name="Yamamoto H."/>
            <person name="Yamane K."/>
            <person name="Yasumoto K."/>
            <person name="Yata K."/>
            <person name="Yoshida K."/>
            <person name="Yoshikawa H.-F."/>
            <person name="Zumstein E."/>
            <person name="Yoshikawa H."/>
            <person name="Danchin A."/>
        </authorList>
    </citation>
    <scope>NUCLEOTIDE SEQUENCE [LARGE SCALE GENOMIC DNA]</scope>
    <source>
        <strain>168</strain>
    </source>
</reference>
<proteinExistence type="evidence at protein level"/>
<comment type="function">
    <text evidence="1">MotA and MotB comprise the stator element of the flagellar motor complex. Required for rotation of the flagellar motor. Probable transmembrane proton channel (By similarity).</text>
</comment>
<comment type="subunit">
    <text evidence="1">Each stator complex is composed of 4 MotA and 2 MotB subunits. 2 A subunits and 1 B subunit are thought to form a single ion channel, so that each stator complex contains two channels (By similarity).</text>
</comment>
<comment type="subcellular location">
    <subcellularLocation>
        <location evidence="1">Cell membrane</location>
        <topology evidence="3">Multi-pass membrane protein</topology>
    </subcellularLocation>
</comment>
<comment type="similarity">
    <text evidence="3">Belongs to the MotA family.</text>
</comment>
<protein>
    <recommendedName>
        <fullName>Motility protein A</fullName>
    </recommendedName>
    <alternativeName>
        <fullName>Chemotaxis protein MotA</fullName>
    </alternativeName>
</protein>
<accession>P28611</accession>
<gene>
    <name type="primary">motA</name>
    <name type="ordered locus">BSU13690</name>
</gene>
<name>MOTA_BACSU</name>
<feature type="chain" id="PRO_0000189570" description="Motility protein A">
    <location>
        <begin position="1"/>
        <end position="270"/>
    </location>
</feature>
<feature type="transmembrane region" description="Helical" evidence="2">
    <location>
        <begin position="4"/>
        <end position="22"/>
    </location>
</feature>
<feature type="transmembrane region" description="Helical" evidence="2">
    <location>
        <begin position="36"/>
        <end position="53"/>
    </location>
</feature>
<feature type="transmembrane region" description="Helical" evidence="2">
    <location>
        <begin position="153"/>
        <end position="173"/>
    </location>
</feature>
<feature type="transmembrane region" description="Helical" evidence="2">
    <location>
        <begin position="182"/>
        <end position="203"/>
    </location>
</feature>
<feature type="topological domain" description="Cytoplasmic" evidence="2">
    <location>
        <begin position="204"/>
        <end position="270"/>
    </location>
</feature>
<feature type="helix" evidence="4">
    <location>
        <begin position="4"/>
        <end position="23"/>
    </location>
</feature>
<feature type="turn" evidence="4">
    <location>
        <begin position="29"/>
        <end position="31"/>
    </location>
</feature>
<feature type="turn" evidence="4">
    <location>
        <begin position="36"/>
        <end position="39"/>
    </location>
</feature>
<feature type="helix" evidence="4">
    <location>
        <begin position="40"/>
        <end position="50"/>
    </location>
</feature>
<feature type="strand" evidence="4">
    <location>
        <begin position="51"/>
        <end position="53"/>
    </location>
</feature>
<feature type="strand" evidence="4">
    <location>
        <begin position="55"/>
        <end position="58"/>
    </location>
</feature>
<feature type="helix" evidence="4">
    <location>
        <begin position="59"/>
        <end position="63"/>
    </location>
</feature>
<feature type="strand" evidence="4">
    <location>
        <begin position="66"/>
        <end position="68"/>
    </location>
</feature>
<feature type="helix" evidence="4">
    <location>
        <begin position="75"/>
        <end position="78"/>
    </location>
</feature>
<feature type="turn" evidence="4">
    <location>
        <begin position="79"/>
        <end position="81"/>
    </location>
</feature>
<feature type="strand" evidence="4">
    <location>
        <begin position="82"/>
        <end position="84"/>
    </location>
</feature>
<feature type="helix" evidence="4">
    <location>
        <begin position="85"/>
        <end position="92"/>
    </location>
</feature>
<feature type="turn" evidence="4">
    <location>
        <begin position="98"/>
        <end position="101"/>
    </location>
</feature>
<feature type="helix" evidence="4">
    <location>
        <begin position="107"/>
        <end position="116"/>
    </location>
</feature>
<feature type="helix" evidence="4">
    <location>
        <begin position="123"/>
        <end position="169"/>
    </location>
</feature>
<feature type="strand" evidence="4">
    <location>
        <begin position="170"/>
        <end position="172"/>
    </location>
</feature>
<feature type="strand" evidence="4">
    <location>
        <begin position="175"/>
        <end position="177"/>
    </location>
</feature>
<feature type="helix" evidence="4">
    <location>
        <begin position="178"/>
        <end position="198"/>
    </location>
</feature>
<feature type="helix" evidence="4">
    <location>
        <begin position="201"/>
        <end position="231"/>
    </location>
</feature>
<feature type="turn" evidence="4">
    <location>
        <begin position="235"/>
        <end position="237"/>
    </location>
</feature>
<feature type="helix" evidence="4">
    <location>
        <begin position="239"/>
        <end position="242"/>
    </location>
</feature>
<feature type="helix" evidence="4">
    <location>
        <begin position="248"/>
        <end position="251"/>
    </location>
</feature>